<comment type="function">
    <text evidence="4">Part of the AP-3 complex, an adaptor-related complex which is not clathrin-associated. The complex is associated with the Golgi region as well as more peripheral structures. It facilitates the budding of vesicles from the Golgi membrane and may be directly involved in trafficking to lysosomes. In concert with the BLOC-1 complex, AP-3 is required to target cargos into vesicles assembled at cell bodies for delivery into neurites and nerve terminals.</text>
</comment>
<comment type="subunit">
    <text evidence="3">Adaptor protein complex 3 (AP-3) is a heterotetramer composed of two large adaptins (delta-type subunit AP3D1 and beta-type subunit AP3B1 or AP3B2), a medium adaptin (mu-type subunit AP3M1 or AP3M2) and a small adaptin (sigma-type subunit APS1 or AP3S2). Interacts with AGAP1. AP-3 associates with the BLOC-1 complex.</text>
</comment>
<comment type="subcellular location">
    <subcellularLocation>
        <location>Golgi apparatus</location>
    </subcellularLocation>
    <subcellularLocation>
        <location evidence="1">Cytoplasmic vesicle membrane</location>
        <topology evidence="1">Peripheral membrane protein</topology>
        <orientation evidence="1">Cytoplasmic side</orientation>
    </subcellularLocation>
    <text evidence="1">Component of the coat surrounding the cytoplasmic face of coated vesicles located at the Golgi complex.</text>
</comment>
<comment type="similarity">
    <text evidence="5">Belongs to the adaptor complexes medium subunit family.</text>
</comment>
<dbReference type="EMBL" id="AF242857">
    <property type="protein sequence ID" value="AAF63512.1"/>
    <property type="molecule type" value="mRNA"/>
</dbReference>
<dbReference type="EMBL" id="BC024595">
    <property type="protein sequence ID" value="AAH24595.1"/>
    <property type="molecule type" value="mRNA"/>
</dbReference>
<dbReference type="EMBL" id="BC090983">
    <property type="protein sequence ID" value="AAH90983.1"/>
    <property type="molecule type" value="mRNA"/>
</dbReference>
<dbReference type="CCDS" id="CCDS26861.1"/>
<dbReference type="RefSeq" id="NP_061299.3">
    <property type="nucleotide sequence ID" value="NM_018829.4"/>
</dbReference>
<dbReference type="RefSeq" id="XP_006519355.1">
    <property type="nucleotide sequence ID" value="XM_006519292.3"/>
</dbReference>
<dbReference type="RefSeq" id="XP_006519356.1">
    <property type="nucleotide sequence ID" value="XM_006519293.3"/>
</dbReference>
<dbReference type="SMR" id="Q9JKC8"/>
<dbReference type="BioGRID" id="207741">
    <property type="interactions" value="6"/>
</dbReference>
<dbReference type="ComplexPortal" id="CPX-5145">
    <property type="entry name" value="Ubiquitous AP-3 Adaptor complex, sigma3a variant"/>
</dbReference>
<dbReference type="ComplexPortal" id="CPX-5146">
    <property type="entry name" value="Ubiquitous AP-3 Adaptor complex, sigma3b variant"/>
</dbReference>
<dbReference type="CORUM" id="Q9JKC8"/>
<dbReference type="FunCoup" id="Q9JKC8">
    <property type="interactions" value="3648"/>
</dbReference>
<dbReference type="IntAct" id="Q9JKC8">
    <property type="interactions" value="4"/>
</dbReference>
<dbReference type="MINT" id="Q9JKC8"/>
<dbReference type="STRING" id="10090.ENSMUSP00000117346"/>
<dbReference type="GlyGen" id="Q9JKC8">
    <property type="glycosylation" value="2 sites, 2 N-linked glycans (2 sites)"/>
</dbReference>
<dbReference type="iPTMnet" id="Q9JKC8"/>
<dbReference type="PhosphoSitePlus" id="Q9JKC8"/>
<dbReference type="SwissPalm" id="Q9JKC8"/>
<dbReference type="jPOST" id="Q9JKC8"/>
<dbReference type="PaxDb" id="10090-ENSMUSP00000117346"/>
<dbReference type="PeptideAtlas" id="Q9JKC8"/>
<dbReference type="ProteomicsDB" id="282133"/>
<dbReference type="Pumba" id="Q9JKC8"/>
<dbReference type="Antibodypedia" id="45437">
    <property type="antibodies" value="131 antibodies from 29 providers"/>
</dbReference>
<dbReference type="DNASU" id="55946"/>
<dbReference type="Ensembl" id="ENSMUST00000154460.8">
    <property type="protein sequence ID" value="ENSMUSP00000117346.2"/>
    <property type="gene ID" value="ENSMUSG00000021824.14"/>
</dbReference>
<dbReference type="GeneID" id="55946"/>
<dbReference type="KEGG" id="mmu:55946"/>
<dbReference type="UCSC" id="uc007sla.2">
    <property type="organism name" value="mouse"/>
</dbReference>
<dbReference type="AGR" id="MGI:1929212"/>
<dbReference type="CTD" id="26985"/>
<dbReference type="MGI" id="MGI:1929212">
    <property type="gene designation" value="Ap3m1"/>
</dbReference>
<dbReference type="VEuPathDB" id="HostDB:ENSMUSG00000021824"/>
<dbReference type="eggNOG" id="KOG2740">
    <property type="taxonomic scope" value="Eukaryota"/>
</dbReference>
<dbReference type="GeneTree" id="ENSGT00940000158184"/>
<dbReference type="HOGENOM" id="CLU_026996_6_2_1"/>
<dbReference type="InParanoid" id="Q9JKC8"/>
<dbReference type="OMA" id="INVHFTI"/>
<dbReference type="OrthoDB" id="870at2759"/>
<dbReference type="PhylomeDB" id="Q9JKC8"/>
<dbReference type="TreeFam" id="TF315187"/>
<dbReference type="BioGRID-ORCS" id="55946">
    <property type="hits" value="3 hits in 78 CRISPR screens"/>
</dbReference>
<dbReference type="ChiTaRS" id="Ap3m1">
    <property type="organism name" value="mouse"/>
</dbReference>
<dbReference type="PRO" id="PR:Q9JKC8"/>
<dbReference type="Proteomes" id="UP000000589">
    <property type="component" value="Chromosome 14"/>
</dbReference>
<dbReference type="RNAct" id="Q9JKC8">
    <property type="molecule type" value="protein"/>
</dbReference>
<dbReference type="Bgee" id="ENSMUSG00000021824">
    <property type="expression patterns" value="Expressed in ectoplacental cone and 260 other cell types or tissues"/>
</dbReference>
<dbReference type="ExpressionAtlas" id="Q9JKC8">
    <property type="expression patterns" value="baseline and differential"/>
</dbReference>
<dbReference type="GO" id="GO:0030123">
    <property type="term" value="C:AP-3 adaptor complex"/>
    <property type="evidence" value="ECO:0000303"/>
    <property type="project" value="ComplexPortal"/>
</dbReference>
<dbReference type="GO" id="GO:1904115">
    <property type="term" value="C:axon cytoplasm"/>
    <property type="evidence" value="ECO:0007669"/>
    <property type="project" value="GOC"/>
</dbReference>
<dbReference type="GO" id="GO:0030131">
    <property type="term" value="C:clathrin adaptor complex"/>
    <property type="evidence" value="ECO:0007669"/>
    <property type="project" value="InterPro"/>
</dbReference>
<dbReference type="GO" id="GO:0030659">
    <property type="term" value="C:cytoplasmic vesicle membrane"/>
    <property type="evidence" value="ECO:0007669"/>
    <property type="project" value="UniProtKB-SubCell"/>
</dbReference>
<dbReference type="GO" id="GO:0005769">
    <property type="term" value="C:early endosome"/>
    <property type="evidence" value="ECO:0000303"/>
    <property type="project" value="ComplexPortal"/>
</dbReference>
<dbReference type="GO" id="GO:0005794">
    <property type="term" value="C:Golgi apparatus"/>
    <property type="evidence" value="ECO:0007669"/>
    <property type="project" value="UniProtKB-SubCell"/>
</dbReference>
<dbReference type="GO" id="GO:0098837">
    <property type="term" value="C:postsynaptic recycling endosome"/>
    <property type="evidence" value="ECO:0000314"/>
    <property type="project" value="SynGO"/>
</dbReference>
<dbReference type="GO" id="GO:0031267">
    <property type="term" value="F:small GTPase binding"/>
    <property type="evidence" value="ECO:0007669"/>
    <property type="project" value="Ensembl"/>
</dbReference>
<dbReference type="GO" id="GO:0008089">
    <property type="term" value="P:anterograde axonal transport"/>
    <property type="evidence" value="ECO:0000315"/>
    <property type="project" value="UniProtKB"/>
</dbReference>
<dbReference type="GO" id="GO:0048490">
    <property type="term" value="P:anterograde synaptic vesicle transport"/>
    <property type="evidence" value="ECO:0000315"/>
    <property type="project" value="UniProtKB"/>
</dbReference>
<dbReference type="GO" id="GO:0035654">
    <property type="term" value="P:clathrin-coated vesicle cargo loading, AP-3-mediated"/>
    <property type="evidence" value="ECO:0000303"/>
    <property type="project" value="ComplexPortal"/>
</dbReference>
<dbReference type="GO" id="GO:0006886">
    <property type="term" value="P:intracellular protein transport"/>
    <property type="evidence" value="ECO:0007669"/>
    <property type="project" value="InterPro"/>
</dbReference>
<dbReference type="GO" id="GO:0046907">
    <property type="term" value="P:intracellular transport"/>
    <property type="evidence" value="ECO:0000303"/>
    <property type="project" value="ComplexPortal"/>
</dbReference>
<dbReference type="GO" id="GO:1903232">
    <property type="term" value="P:melanosome assembly"/>
    <property type="evidence" value="ECO:0000303"/>
    <property type="project" value="ComplexPortal"/>
</dbReference>
<dbReference type="GO" id="GO:0060155">
    <property type="term" value="P:platelet dense granule organization"/>
    <property type="evidence" value="ECO:0000303"/>
    <property type="project" value="ComplexPortal"/>
</dbReference>
<dbReference type="GO" id="GO:0098884">
    <property type="term" value="P:postsynaptic neurotransmitter receptor internalization"/>
    <property type="evidence" value="ECO:0000314"/>
    <property type="project" value="SynGO"/>
</dbReference>
<dbReference type="GO" id="GO:0016192">
    <property type="term" value="P:vesicle-mediated transport"/>
    <property type="evidence" value="ECO:0000303"/>
    <property type="project" value="ComplexPortal"/>
</dbReference>
<dbReference type="CDD" id="cd09260">
    <property type="entry name" value="AP-3_Mu3A_Cterm"/>
    <property type="match status" value="1"/>
</dbReference>
<dbReference type="CDD" id="cd14837">
    <property type="entry name" value="AP3_Mu_N"/>
    <property type="match status" value="1"/>
</dbReference>
<dbReference type="FunFam" id="3.30.450.60:FF:000012">
    <property type="entry name" value="AP-3 complex subunit mu-1 isoform X1"/>
    <property type="match status" value="1"/>
</dbReference>
<dbReference type="FunFam" id="2.60.40.1170:FF:000006">
    <property type="entry name" value="Putative AP-3 complex subunit mu-2-like"/>
    <property type="match status" value="1"/>
</dbReference>
<dbReference type="Gene3D" id="3.30.450.60">
    <property type="match status" value="1"/>
</dbReference>
<dbReference type="Gene3D" id="2.60.40.1170">
    <property type="entry name" value="Mu homology domain, subdomain B"/>
    <property type="match status" value="2"/>
</dbReference>
<dbReference type="InterPro" id="IPR050431">
    <property type="entry name" value="Adaptor_comp_med_subunit"/>
</dbReference>
<dbReference type="InterPro" id="IPR036168">
    <property type="entry name" value="AP2_Mu_C_sf"/>
</dbReference>
<dbReference type="InterPro" id="IPR022775">
    <property type="entry name" value="AP_mu_sigma_su"/>
</dbReference>
<dbReference type="InterPro" id="IPR001392">
    <property type="entry name" value="Clathrin_mu"/>
</dbReference>
<dbReference type="InterPro" id="IPR018240">
    <property type="entry name" value="Clathrin_mu_CS"/>
</dbReference>
<dbReference type="InterPro" id="IPR011012">
    <property type="entry name" value="Longin-like_dom_sf"/>
</dbReference>
<dbReference type="InterPro" id="IPR028565">
    <property type="entry name" value="MHD"/>
</dbReference>
<dbReference type="PANTHER" id="PTHR10529">
    <property type="entry name" value="AP COMPLEX SUBUNIT MU"/>
    <property type="match status" value="1"/>
</dbReference>
<dbReference type="Pfam" id="PF00928">
    <property type="entry name" value="Adap_comp_sub"/>
    <property type="match status" value="1"/>
</dbReference>
<dbReference type="Pfam" id="PF01217">
    <property type="entry name" value="Clat_adaptor_s"/>
    <property type="match status" value="1"/>
</dbReference>
<dbReference type="PIRSF" id="PIRSF005992">
    <property type="entry name" value="Clathrin_mu"/>
    <property type="match status" value="1"/>
</dbReference>
<dbReference type="PRINTS" id="PR00314">
    <property type="entry name" value="CLATHRINADPT"/>
</dbReference>
<dbReference type="SUPFAM" id="SSF49447">
    <property type="entry name" value="Second domain of Mu2 adaptin subunit (ap50) of ap2 adaptor"/>
    <property type="match status" value="1"/>
</dbReference>
<dbReference type="SUPFAM" id="SSF64356">
    <property type="entry name" value="SNARE-like"/>
    <property type="match status" value="1"/>
</dbReference>
<dbReference type="PROSITE" id="PS00990">
    <property type="entry name" value="CLAT_ADAPTOR_M_1"/>
    <property type="match status" value="1"/>
</dbReference>
<dbReference type="PROSITE" id="PS00991">
    <property type="entry name" value="CLAT_ADAPTOR_M_2"/>
    <property type="match status" value="1"/>
</dbReference>
<dbReference type="PROSITE" id="PS51072">
    <property type="entry name" value="MHD"/>
    <property type="match status" value="1"/>
</dbReference>
<reference key="1">
    <citation type="submission" date="2000-03" db="EMBL/GenBank/DDBJ databases">
        <title>Mouse medium chain clathrin adaptor protein mu3A.</title>
        <authorList>
            <person name="Werner H."/>
            <person name="Nave K.-A."/>
        </authorList>
    </citation>
    <scope>NUCLEOTIDE SEQUENCE [MRNA]</scope>
</reference>
<reference key="2">
    <citation type="journal article" date="2004" name="Genome Res.">
        <title>The status, quality, and expansion of the NIH full-length cDNA project: the Mammalian Gene Collection (MGC).</title>
        <authorList>
            <consortium name="The MGC Project Team"/>
        </authorList>
    </citation>
    <scope>NUCLEOTIDE SEQUENCE [LARGE SCALE MRNA]</scope>
    <source>
        <strain>C57BL/6J</strain>
        <tissue>Mammary gland</tissue>
        <tissue>Testis</tissue>
    </source>
</reference>
<reference key="3">
    <citation type="journal article" date="2003" name="Dev. Cell">
        <title>Specific regulation of the adaptor protein complex AP-3 by the Arf GAP AGAP1.</title>
        <authorList>
            <person name="Nie Z."/>
            <person name="Boehm M."/>
            <person name="Boja E.S."/>
            <person name="Vass W.C."/>
            <person name="Bonifacino J.S."/>
            <person name="Fales H.M."/>
            <person name="Randazzo P.A."/>
        </authorList>
    </citation>
    <scope>INTERACTION WITH AGAP1</scope>
</reference>
<reference key="4">
    <citation type="journal article" date="2010" name="Cell">
        <title>A tissue-specific atlas of mouse protein phosphorylation and expression.</title>
        <authorList>
            <person name="Huttlin E.L."/>
            <person name="Jedrychowski M.P."/>
            <person name="Elias J.E."/>
            <person name="Goswami T."/>
            <person name="Rad R."/>
            <person name="Beausoleil S.A."/>
            <person name="Villen J."/>
            <person name="Haas W."/>
            <person name="Sowa M.E."/>
            <person name="Gygi S.P."/>
        </authorList>
    </citation>
    <scope>IDENTIFICATION BY MASS SPECTROMETRY [LARGE SCALE ANALYSIS]</scope>
    <source>
        <tissue>Brain</tissue>
        <tissue>Kidney</tissue>
        <tissue>Lung</tissue>
        <tissue>Pancreas</tissue>
        <tissue>Spleen</tissue>
        <tissue>Testis</tissue>
    </source>
</reference>
<reference key="5">
    <citation type="journal article" date="2011" name="Mol. Biol. Cell">
        <title>The schizophrenia susceptibility factor dysbindin and its associated complex sort cargoes from cell bodies to the synapse.</title>
        <authorList>
            <person name="Larimore J."/>
            <person name="Tornieri K."/>
            <person name="Ryder P.V."/>
            <person name="Gokhale A."/>
            <person name="Zlatic S.A."/>
            <person name="Craige B."/>
            <person name="Lee J.D."/>
            <person name="Talbot K."/>
            <person name="Pare J.F."/>
            <person name="Smith Y."/>
            <person name="Faundez V."/>
        </authorList>
    </citation>
    <scope>FUNCTION</scope>
    <scope>ASSOCIATION WITH THE BLOC-1 COMPLEX</scope>
</reference>
<protein>
    <recommendedName>
        <fullName>AP-3 complex subunit mu-1</fullName>
    </recommendedName>
    <alternativeName>
        <fullName>AP-3 adaptor complex mu3A subunit</fullName>
    </alternativeName>
    <alternativeName>
        <fullName>Adaptor-related protein complex 3 subunit mu-1</fullName>
    </alternativeName>
    <alternativeName>
        <fullName>Mu-adaptin 3A</fullName>
    </alternativeName>
    <alternativeName>
        <fullName>Mu3A-adaptin</fullName>
    </alternativeName>
</protein>
<keyword id="KW-0968">Cytoplasmic vesicle</keyword>
<keyword id="KW-0333">Golgi apparatus</keyword>
<keyword id="KW-0472">Membrane</keyword>
<keyword id="KW-0653">Protein transport</keyword>
<keyword id="KW-1185">Reference proteome</keyword>
<keyword id="KW-0813">Transport</keyword>
<evidence type="ECO:0000250" key="1"/>
<evidence type="ECO:0000255" key="2">
    <source>
        <dbReference type="PROSITE-ProRule" id="PRU00404"/>
    </source>
</evidence>
<evidence type="ECO:0000269" key="3">
    <source>
    </source>
</evidence>
<evidence type="ECO:0000269" key="4">
    <source>
    </source>
</evidence>
<evidence type="ECO:0000305" key="5"/>
<accession>Q9JKC8</accession>
<accession>Q5BKQ6</accession>
<sequence length="418" mass="46936">MIHSLFLINCSGDIFLEKHWKSVVSQSVCDYFFEAQEKAADVENVPPVISTPHHYLISIYRDKLFFVSVIQTEVPPLFVIEFLHRVADTFQDYFGECSEAAIKDNVVIVYELLEEMLDNGFPLATESNILKELIKPPTILRSVVNSITGSSNVGDTLPTGQLSNIPWRRAGVKYTNNEAYFDVVEEIDAIIDKSGSTVFAEIQGVIDACIKLSGMPDLSLSFMNPRLLDDVSFHPCIRFKRWESERVLSFIPPDGNFRLISYRVSSQNLVAIPVYVKHSISFKENSSCGRFDITIGPKQNMGKTIEGITVTVHMPKVVLNMNLTPTQGSYTFDPVTKVLAWDVGKITPQKLPSLKGLVNLQSGAPKPEENPNLNIQFKIQQLAISGLKVNRLDMYGEKYKPFKGVKYVTKAGKFQVRT</sequence>
<gene>
    <name type="primary">Ap3m1</name>
</gene>
<proteinExistence type="evidence at protein level"/>
<organism>
    <name type="scientific">Mus musculus</name>
    <name type="common">Mouse</name>
    <dbReference type="NCBI Taxonomy" id="10090"/>
    <lineage>
        <taxon>Eukaryota</taxon>
        <taxon>Metazoa</taxon>
        <taxon>Chordata</taxon>
        <taxon>Craniata</taxon>
        <taxon>Vertebrata</taxon>
        <taxon>Euteleostomi</taxon>
        <taxon>Mammalia</taxon>
        <taxon>Eutheria</taxon>
        <taxon>Euarchontoglires</taxon>
        <taxon>Glires</taxon>
        <taxon>Rodentia</taxon>
        <taxon>Myomorpha</taxon>
        <taxon>Muroidea</taxon>
        <taxon>Muridae</taxon>
        <taxon>Murinae</taxon>
        <taxon>Mus</taxon>
        <taxon>Mus</taxon>
    </lineage>
</organism>
<feature type="chain" id="PRO_0000193782" description="AP-3 complex subunit mu-1">
    <location>
        <begin position="1"/>
        <end position="418"/>
    </location>
</feature>
<feature type="domain" description="MHD" evidence="2">
    <location>
        <begin position="176"/>
        <end position="417"/>
    </location>
</feature>
<name>AP3M1_MOUSE</name>